<organism>
    <name type="scientific">Acanthamoeba polyphaga mimivirus</name>
    <name type="common">APMV</name>
    <dbReference type="NCBI Taxonomy" id="212035"/>
    <lineage>
        <taxon>Viruses</taxon>
        <taxon>Varidnaviria</taxon>
        <taxon>Bamfordvirae</taxon>
        <taxon>Nucleocytoviricota</taxon>
        <taxon>Megaviricetes</taxon>
        <taxon>Imitervirales</taxon>
        <taxon>Mimiviridae</taxon>
        <taxon>Megamimivirinae</taxon>
        <taxon>Mimivirus</taxon>
        <taxon>Mimivirus bradfordmassiliense</taxon>
    </lineage>
</organism>
<sequence>MTDYQSKYSLYKRKYLSLKQKQNGGNNTADNTADNIDPIVKKFVDSIKDAKPVYEVTPEEARKNLNSIQSDQSYKTTVDMENVVVNDKNVNATIIRPKGNRDRLPVVFYVHGAGWVMGGLQTHGRFVSEIVNKANVTVIFVNYSLAPEKKFPTQIVECYDALVYFYSNAQRYNLDFNNIIVVGDSVGGNMATVLAMLTREKTGPRFKYQILLYPVISAAMNTQSYQTFENGPWLSKKSMEWFYEQYTEPNQNLMIPSISPINATDRSIQYLPPTLLVVDENDVLRDEGEAYAHRLSNLGVPTKSVRVLGTIHDFMLLNPLVKSPATKLTLEIVVNEIKRITTPNKN</sequence>
<feature type="chain" id="PRO_0000248625" description="Putative alpha/beta hydrolase R526">
    <location>
        <begin position="1"/>
        <end position="346"/>
    </location>
</feature>
<dbReference type="EC" id="3.-.-.-"/>
<dbReference type="EMBL" id="AY653733">
    <property type="protein sequence ID" value="AAV50790.1"/>
    <property type="molecule type" value="Genomic_DNA"/>
</dbReference>
<dbReference type="SMR" id="Q5UQ83"/>
<dbReference type="ESTHER" id="mimiv-q5uq83">
    <property type="family name" value="Hormone-sensitive_lipase_like"/>
</dbReference>
<dbReference type="KEGG" id="vg:9925159"/>
<dbReference type="OrthoDB" id="9811at10239"/>
<dbReference type="Proteomes" id="UP000001134">
    <property type="component" value="Genome"/>
</dbReference>
<dbReference type="GO" id="GO:0044423">
    <property type="term" value="C:virion component"/>
    <property type="evidence" value="ECO:0007669"/>
    <property type="project" value="UniProtKB-KW"/>
</dbReference>
<dbReference type="GO" id="GO:0016787">
    <property type="term" value="F:hydrolase activity"/>
    <property type="evidence" value="ECO:0007669"/>
    <property type="project" value="UniProtKB-KW"/>
</dbReference>
<dbReference type="Gene3D" id="3.40.50.1820">
    <property type="entry name" value="alpha/beta hydrolase"/>
    <property type="match status" value="1"/>
</dbReference>
<dbReference type="InterPro" id="IPR013094">
    <property type="entry name" value="AB_hydrolase_3"/>
</dbReference>
<dbReference type="InterPro" id="IPR029058">
    <property type="entry name" value="AB_hydrolase_fold"/>
</dbReference>
<dbReference type="InterPro" id="IPR050300">
    <property type="entry name" value="GDXG_lipolytic_enzyme"/>
</dbReference>
<dbReference type="PANTHER" id="PTHR48081">
    <property type="entry name" value="AB HYDROLASE SUPERFAMILY PROTEIN C4A8.06C"/>
    <property type="match status" value="1"/>
</dbReference>
<dbReference type="PANTHER" id="PTHR48081:SF8">
    <property type="entry name" value="ALPHA_BETA HYDROLASE FOLD-3 DOMAIN-CONTAINING PROTEIN-RELATED"/>
    <property type="match status" value="1"/>
</dbReference>
<dbReference type="Pfam" id="PF07859">
    <property type="entry name" value="Abhydrolase_3"/>
    <property type="match status" value="1"/>
</dbReference>
<dbReference type="SUPFAM" id="SSF53474">
    <property type="entry name" value="alpha/beta-Hydrolases"/>
    <property type="match status" value="1"/>
</dbReference>
<gene>
    <name type="ordered locus">MIMI_R526</name>
</gene>
<comment type="subcellular location">
    <subcellularLocation>
        <location evidence="1">Virion</location>
    </subcellularLocation>
</comment>
<comment type="similarity">
    <text evidence="2">Belongs to the AB hydrolase 3 family.</text>
</comment>
<evidence type="ECO:0000269" key="1">
    <source>
    </source>
</evidence>
<evidence type="ECO:0000305" key="2"/>
<proteinExistence type="evidence at protein level"/>
<reference key="1">
    <citation type="journal article" date="2004" name="Science">
        <title>The 1.2-megabase genome sequence of Mimivirus.</title>
        <authorList>
            <person name="Raoult D."/>
            <person name="Audic S."/>
            <person name="Robert C."/>
            <person name="Abergel C."/>
            <person name="Renesto P."/>
            <person name="Ogata H."/>
            <person name="La Scola B."/>
            <person name="Susan M."/>
            <person name="Claverie J.-M."/>
        </authorList>
    </citation>
    <scope>NUCLEOTIDE SEQUENCE [LARGE SCALE GENOMIC DNA]</scope>
    <source>
        <strain>Rowbotham-Bradford</strain>
    </source>
</reference>
<reference key="2">
    <citation type="journal article" date="2006" name="J. Virol.">
        <title>Mimivirus giant particles incorporate a large fraction of anonymous and unique gene products.</title>
        <authorList>
            <person name="Renesto P."/>
            <person name="Abergel C."/>
            <person name="Decloquement P."/>
            <person name="Moinier D."/>
            <person name="Azza S."/>
            <person name="Ogata H."/>
            <person name="Fourquet P."/>
            <person name="Gorvel J.-P."/>
            <person name="Claverie J.-M."/>
            <person name="Raoult D."/>
        </authorList>
    </citation>
    <scope>IDENTIFICATION BY MASS SPECTROMETRY [LARGE SCALE ANALYSIS]</scope>
    <scope>SUBCELLULAR LOCATION</scope>
</reference>
<organismHost>
    <name type="scientific">Acanthamoeba polyphaga</name>
    <name type="common">Amoeba</name>
    <dbReference type="NCBI Taxonomy" id="5757"/>
</organismHost>
<keyword id="KW-0378">Hydrolase</keyword>
<keyword id="KW-1185">Reference proteome</keyword>
<keyword id="KW-0946">Virion</keyword>
<accession>Q5UQ83</accession>
<protein>
    <recommendedName>
        <fullName>Putative alpha/beta hydrolase R526</fullName>
        <ecNumber>3.-.-.-</ecNumber>
    </recommendedName>
</protein>
<name>YR526_MIMIV</name>